<dbReference type="EC" id="7.1.1.-" evidence="1"/>
<dbReference type="EMBL" id="AE005673">
    <property type="protein sequence ID" value="AAK23927.1"/>
    <property type="molecule type" value="Genomic_DNA"/>
</dbReference>
<dbReference type="PIR" id="C87491">
    <property type="entry name" value="C87491"/>
</dbReference>
<dbReference type="RefSeq" id="NP_420759.1">
    <property type="nucleotide sequence ID" value="NC_002696.2"/>
</dbReference>
<dbReference type="SMR" id="Q9A6X4"/>
<dbReference type="STRING" id="190650.CC_1952"/>
<dbReference type="EnsemblBacteria" id="AAK23927">
    <property type="protein sequence ID" value="AAK23927"/>
    <property type="gene ID" value="CC_1952"/>
</dbReference>
<dbReference type="KEGG" id="ccr:CC_1952"/>
<dbReference type="PATRIC" id="fig|190650.5.peg.1968"/>
<dbReference type="eggNOG" id="COG0649">
    <property type="taxonomic scope" value="Bacteria"/>
</dbReference>
<dbReference type="HOGENOM" id="CLU_015134_1_1_5"/>
<dbReference type="BioCyc" id="CAULO:CC1952-MONOMER"/>
<dbReference type="Proteomes" id="UP000001816">
    <property type="component" value="Chromosome"/>
</dbReference>
<dbReference type="GO" id="GO:0005886">
    <property type="term" value="C:plasma membrane"/>
    <property type="evidence" value="ECO:0007669"/>
    <property type="project" value="UniProtKB-SubCell"/>
</dbReference>
<dbReference type="GO" id="GO:0051287">
    <property type="term" value="F:NAD binding"/>
    <property type="evidence" value="ECO:0007669"/>
    <property type="project" value="InterPro"/>
</dbReference>
<dbReference type="GO" id="GO:0050136">
    <property type="term" value="F:NADH:ubiquinone reductase (non-electrogenic) activity"/>
    <property type="evidence" value="ECO:0007669"/>
    <property type="project" value="UniProtKB-UniRule"/>
</dbReference>
<dbReference type="GO" id="GO:0048038">
    <property type="term" value="F:quinone binding"/>
    <property type="evidence" value="ECO:0007669"/>
    <property type="project" value="UniProtKB-KW"/>
</dbReference>
<dbReference type="FunFam" id="1.10.645.10:FF:000005">
    <property type="entry name" value="NADH-quinone oxidoreductase subunit D"/>
    <property type="match status" value="1"/>
</dbReference>
<dbReference type="Gene3D" id="1.10.645.10">
    <property type="entry name" value="Cytochrome-c3 Hydrogenase, chain B"/>
    <property type="match status" value="1"/>
</dbReference>
<dbReference type="HAMAP" id="MF_01358">
    <property type="entry name" value="NDH1_NuoD"/>
    <property type="match status" value="1"/>
</dbReference>
<dbReference type="InterPro" id="IPR001135">
    <property type="entry name" value="NADH_Q_OxRdtase_suD"/>
</dbReference>
<dbReference type="InterPro" id="IPR014029">
    <property type="entry name" value="NADH_UbQ_OxRdtase_49kDa_CS"/>
</dbReference>
<dbReference type="InterPro" id="IPR022885">
    <property type="entry name" value="NDH1_su_D/H"/>
</dbReference>
<dbReference type="InterPro" id="IPR029014">
    <property type="entry name" value="NiFe-Hase_large"/>
</dbReference>
<dbReference type="NCBIfam" id="TIGR01962">
    <property type="entry name" value="NuoD"/>
    <property type="match status" value="1"/>
</dbReference>
<dbReference type="NCBIfam" id="NF004739">
    <property type="entry name" value="PRK06075.1"/>
    <property type="match status" value="1"/>
</dbReference>
<dbReference type="PANTHER" id="PTHR11993:SF10">
    <property type="entry name" value="NADH DEHYDROGENASE [UBIQUINONE] IRON-SULFUR PROTEIN 2, MITOCHONDRIAL"/>
    <property type="match status" value="1"/>
</dbReference>
<dbReference type="PANTHER" id="PTHR11993">
    <property type="entry name" value="NADH-UBIQUINONE OXIDOREDUCTASE 49 KDA SUBUNIT"/>
    <property type="match status" value="1"/>
</dbReference>
<dbReference type="Pfam" id="PF00346">
    <property type="entry name" value="Complex1_49kDa"/>
    <property type="match status" value="1"/>
</dbReference>
<dbReference type="SUPFAM" id="SSF56762">
    <property type="entry name" value="HydB/Nqo4-like"/>
    <property type="match status" value="1"/>
</dbReference>
<dbReference type="PROSITE" id="PS00535">
    <property type="entry name" value="COMPLEX1_49K"/>
    <property type="match status" value="1"/>
</dbReference>
<comment type="function">
    <text evidence="1">NDH-1 shuttles electrons from NADH, via FMN and iron-sulfur (Fe-S) centers, to quinones in the respiratory chain. The immediate electron acceptor for the enzyme in this species is believed to be ubiquinone. Couples the redox reaction to proton translocation (for every two electrons transferred, four hydrogen ions are translocated across the cytoplasmic membrane), and thus conserves the redox energy in a proton gradient.</text>
</comment>
<comment type="catalytic activity">
    <reaction evidence="1">
        <text>a quinone + NADH + 5 H(+)(in) = a quinol + NAD(+) + 4 H(+)(out)</text>
        <dbReference type="Rhea" id="RHEA:57888"/>
        <dbReference type="ChEBI" id="CHEBI:15378"/>
        <dbReference type="ChEBI" id="CHEBI:24646"/>
        <dbReference type="ChEBI" id="CHEBI:57540"/>
        <dbReference type="ChEBI" id="CHEBI:57945"/>
        <dbReference type="ChEBI" id="CHEBI:132124"/>
    </reaction>
</comment>
<comment type="subunit">
    <text evidence="1">NDH-1 is composed of 14 different subunits. Subunits NuoB, C, D, E, F, and G constitute the peripheral sector of the complex.</text>
</comment>
<comment type="subcellular location">
    <subcellularLocation>
        <location evidence="1">Cell inner membrane</location>
        <topology evidence="1">Peripheral membrane protein</topology>
        <orientation evidence="1">Cytoplasmic side</orientation>
    </subcellularLocation>
</comment>
<comment type="similarity">
    <text evidence="1">Belongs to the complex I 49 kDa subunit family.</text>
</comment>
<evidence type="ECO:0000255" key="1">
    <source>
        <dbReference type="HAMAP-Rule" id="MF_01358"/>
    </source>
</evidence>
<keyword id="KW-0997">Cell inner membrane</keyword>
<keyword id="KW-1003">Cell membrane</keyword>
<keyword id="KW-0472">Membrane</keyword>
<keyword id="KW-0520">NAD</keyword>
<keyword id="KW-0874">Quinone</keyword>
<keyword id="KW-1185">Reference proteome</keyword>
<keyword id="KW-1278">Translocase</keyword>
<keyword id="KW-0813">Transport</keyword>
<keyword id="KW-0830">Ubiquinone</keyword>
<accession>Q9A6X4</accession>
<gene>
    <name evidence="1" type="primary">nuoD</name>
    <name type="ordered locus">CC_1952</name>
</gene>
<feature type="chain" id="PRO_0000357791" description="NADH-quinone oxidoreductase subunit D">
    <location>
        <begin position="1"/>
        <end position="398"/>
    </location>
</feature>
<proteinExistence type="inferred from homology"/>
<organism>
    <name type="scientific">Caulobacter vibrioides (strain ATCC 19089 / CIP 103742 / CB 15)</name>
    <name type="common">Caulobacter crescentus</name>
    <dbReference type="NCBI Taxonomy" id="190650"/>
    <lineage>
        <taxon>Bacteria</taxon>
        <taxon>Pseudomonadati</taxon>
        <taxon>Pseudomonadota</taxon>
        <taxon>Alphaproteobacteria</taxon>
        <taxon>Caulobacterales</taxon>
        <taxon>Caulobacteraceae</taxon>
        <taxon>Caulobacter</taxon>
    </lineage>
</organism>
<reference key="1">
    <citation type="journal article" date="2001" name="Proc. Natl. Acad. Sci. U.S.A.">
        <title>Complete genome sequence of Caulobacter crescentus.</title>
        <authorList>
            <person name="Nierman W.C."/>
            <person name="Feldblyum T.V."/>
            <person name="Laub M.T."/>
            <person name="Paulsen I.T."/>
            <person name="Nelson K.E."/>
            <person name="Eisen J.A."/>
            <person name="Heidelberg J.F."/>
            <person name="Alley M.R.K."/>
            <person name="Ohta N."/>
            <person name="Maddock J.R."/>
            <person name="Potocka I."/>
            <person name="Nelson W.C."/>
            <person name="Newton A."/>
            <person name="Stephens C."/>
            <person name="Phadke N.D."/>
            <person name="Ely B."/>
            <person name="DeBoy R.T."/>
            <person name="Dodson R.J."/>
            <person name="Durkin A.S."/>
            <person name="Gwinn M.L."/>
            <person name="Haft D.H."/>
            <person name="Kolonay J.F."/>
            <person name="Smit J."/>
            <person name="Craven M.B."/>
            <person name="Khouri H.M."/>
            <person name="Shetty J."/>
            <person name="Berry K.J."/>
            <person name="Utterback T.R."/>
            <person name="Tran K."/>
            <person name="Wolf A.M."/>
            <person name="Vamathevan J.J."/>
            <person name="Ermolaeva M.D."/>
            <person name="White O."/>
            <person name="Salzberg S.L."/>
            <person name="Venter J.C."/>
            <person name="Shapiro L."/>
            <person name="Fraser C.M."/>
        </authorList>
    </citation>
    <scope>NUCLEOTIDE SEQUENCE [LARGE SCALE GENOMIC DNA]</scope>
    <source>
        <strain>ATCC 19089 / CIP 103742 / CB 15</strain>
    </source>
</reference>
<protein>
    <recommendedName>
        <fullName evidence="1">NADH-quinone oxidoreductase subunit D</fullName>
        <ecNumber evidence="1">7.1.1.-</ecNumber>
    </recommendedName>
    <alternativeName>
        <fullName evidence="1">NADH dehydrogenase I subunit D</fullName>
    </alternativeName>
    <alternativeName>
        <fullName evidence="1">NDH-1 subunit D</fullName>
    </alternativeName>
</protein>
<name>NUOD_CAUVC</name>
<sequence>MVPAIPETPVRKFNINFGPQHPAAHGVLRLVLELDGEIVERVDPHIGLLHRGTEKLMEARTYLQNIPYFDRLDYVAPMNQEHAFCLAIEKLLGVEVPIRGQIIRVLYSEIGRILNHLLNVTTQAMDVGALTPPLWGFEEREKLMVFYERACGARLHSNYFRPGGVHQDLPPELVEDIDTWAKAFPKICDDIEGLITDNRIFKQRNVDIGVVSKEEAISWGFSGVMVRGSGIAWDLRRSQPYENYNDFEFDIPLGKNGDCYDRYLCRMQEMRESTKIIRQACEMLRKTHGPVLSEDNKVAPPRRAEMKRSMEALIHHFKLYTEGFKTPAGEVYACVEAPKGEFGVFVVSDGTNKPYRCKIRAPGFPHLAAMDWMNRGHQLADVSAILGSLDIVFGEIDR</sequence>